<name>CSPL6_PHYPA</name>
<comment type="subunit">
    <text evidence="1">Homodimer and heterodimers.</text>
</comment>
<comment type="subcellular location">
    <subcellularLocation>
        <location evidence="1">Cell membrane</location>
        <topology evidence="1">Multi-pass membrane protein</topology>
    </subcellularLocation>
</comment>
<comment type="similarity">
    <text evidence="3">Belongs to the Casparian strip membrane proteins (CASP) family.</text>
</comment>
<organism>
    <name type="scientific">Physcomitrium patens</name>
    <name type="common">Spreading-leaved earth moss</name>
    <name type="synonym">Physcomitrella patens</name>
    <dbReference type="NCBI Taxonomy" id="3218"/>
    <lineage>
        <taxon>Eukaryota</taxon>
        <taxon>Viridiplantae</taxon>
        <taxon>Streptophyta</taxon>
        <taxon>Embryophyta</taxon>
        <taxon>Bryophyta</taxon>
        <taxon>Bryophytina</taxon>
        <taxon>Bryopsida</taxon>
        <taxon>Funariidae</taxon>
        <taxon>Funariales</taxon>
        <taxon>Funariaceae</taxon>
        <taxon>Physcomitrium</taxon>
    </lineage>
</organism>
<proteinExistence type="evidence at transcript level"/>
<sequence>MGKGPGLDPSWSLAGTPCFKSTRLGKTHLESTAGGAQTGARLDPVQIARHSMCSSSVRLDHGPLPVGVAAMQGETFGPGADSQRSASGAEYQQLTCARLSVRDICYKLHAAARISMESGAWDSEYFDKRATPGVGAVGGSKMPPPHAHGAVAPPPAMYNNPAMESNKDDNFFGAIVLSLRAAQIVFTVVGLGVMGSLKHTSHGDYYYYYYDFSFTQVDSYIGVLSLDVIVCLYAIVQLVLCFIQRSNQGKYLSSPTTVAAKLTFVFDQVLAYALVATAGAAAGSALEIRKGTSCSGTWTVICSKGEASVAMSFFAFAFLAATAAVYSVRLLRITGR</sequence>
<keyword id="KW-1003">Cell membrane</keyword>
<keyword id="KW-0472">Membrane</keyword>
<keyword id="KW-1185">Reference proteome</keyword>
<keyword id="KW-0812">Transmembrane</keyword>
<keyword id="KW-1133">Transmembrane helix</keyword>
<protein>
    <recommendedName>
        <fullName>CASP-like protein UU1</fullName>
        <shortName>PpCASPLUU1</shortName>
    </recommendedName>
</protein>
<reference key="1">
    <citation type="journal article" date="2008" name="Science">
        <title>The Physcomitrella genome reveals evolutionary insights into the conquest of land by plants.</title>
        <authorList>
            <person name="Rensing S.A."/>
            <person name="Lang D."/>
            <person name="Zimmer A.D."/>
            <person name="Terry A."/>
            <person name="Salamov A."/>
            <person name="Shapiro H."/>
            <person name="Nishiyama T."/>
            <person name="Perroud P.-F."/>
            <person name="Lindquist E.A."/>
            <person name="Kamisugi Y."/>
            <person name="Tanahashi T."/>
            <person name="Sakakibara K."/>
            <person name="Fujita T."/>
            <person name="Oishi K."/>
            <person name="Shin-I T."/>
            <person name="Kuroki Y."/>
            <person name="Toyoda A."/>
            <person name="Suzuki Y."/>
            <person name="Hashimoto S.-I."/>
            <person name="Yamaguchi K."/>
            <person name="Sugano S."/>
            <person name="Kohara Y."/>
            <person name="Fujiyama A."/>
            <person name="Anterola A."/>
            <person name="Aoki S."/>
            <person name="Ashton N."/>
            <person name="Barbazuk W.B."/>
            <person name="Barker E."/>
            <person name="Bennetzen J.L."/>
            <person name="Blankenship R."/>
            <person name="Cho S.H."/>
            <person name="Dutcher S.K."/>
            <person name="Estelle M."/>
            <person name="Fawcett J.A."/>
            <person name="Gundlach H."/>
            <person name="Hanada K."/>
            <person name="Heyl A."/>
            <person name="Hicks K.A."/>
            <person name="Hughes J."/>
            <person name="Lohr M."/>
            <person name="Mayer K."/>
            <person name="Melkozernov A."/>
            <person name="Murata T."/>
            <person name="Nelson D.R."/>
            <person name="Pils B."/>
            <person name="Prigge M."/>
            <person name="Reiss B."/>
            <person name="Renner T."/>
            <person name="Rombauts S."/>
            <person name="Rushton P.J."/>
            <person name="Sanderfoot A."/>
            <person name="Schween G."/>
            <person name="Shiu S.-H."/>
            <person name="Stueber K."/>
            <person name="Theodoulou F.L."/>
            <person name="Tu H."/>
            <person name="Van de Peer Y."/>
            <person name="Verrier P.J."/>
            <person name="Waters E."/>
            <person name="Wood A."/>
            <person name="Yang L."/>
            <person name="Cove D."/>
            <person name="Cuming A.C."/>
            <person name="Hasebe M."/>
            <person name="Lucas S."/>
            <person name="Mishler B.D."/>
            <person name="Reski R."/>
            <person name="Grigoriev I.V."/>
            <person name="Quatrano R.S."/>
            <person name="Boore J.L."/>
        </authorList>
    </citation>
    <scope>NUCLEOTIDE SEQUENCE [LARGE SCALE GENOMIC DNA]</scope>
    <source>
        <strain>cv. Gransden 2004</strain>
    </source>
</reference>
<reference key="2">
    <citation type="journal article" date="2014" name="Plant Physiol.">
        <title>Functional and evolutionary analysis of the CASPARIAN STRIP MEMBRANE DOMAIN PROTEIN family.</title>
        <authorList>
            <person name="Roppolo D."/>
            <person name="Boeckmann B."/>
            <person name="Pfister A."/>
            <person name="Boutet E."/>
            <person name="Rubio M.C."/>
            <person name="Denervaud-Tendon V."/>
            <person name="Vermeer J.E."/>
            <person name="Gheyselinck J."/>
            <person name="Xenarios I."/>
            <person name="Geldner N."/>
        </authorList>
    </citation>
    <scope>GENE FAMILY</scope>
    <scope>NOMENCLATURE</scope>
</reference>
<gene>
    <name type="ORF">PHYPADRAFT_234099</name>
</gene>
<evidence type="ECO:0000250" key="1"/>
<evidence type="ECO:0000255" key="2"/>
<evidence type="ECO:0000305" key="3"/>
<dbReference type="EMBL" id="DS545008">
    <property type="protein sequence ID" value="EDQ65251.1"/>
    <property type="molecule type" value="Genomic_DNA"/>
</dbReference>
<dbReference type="RefSeq" id="XP_001769891.1">
    <property type="nucleotide sequence ID" value="XM_001769839.1"/>
</dbReference>
<dbReference type="PaxDb" id="3218-PP1S119_55V6.1"/>
<dbReference type="EnsemblPlants" id="Pp3c2_25590V3.2">
    <property type="protein sequence ID" value="Pp3c2_25590V3.2"/>
    <property type="gene ID" value="Pp3c2_25590"/>
</dbReference>
<dbReference type="Gramene" id="Pp3c2_25590V3.2">
    <property type="protein sequence ID" value="Pp3c2_25590V3.2"/>
    <property type="gene ID" value="Pp3c2_25590"/>
</dbReference>
<dbReference type="HOGENOM" id="CLU_1252447_0_0_1"/>
<dbReference type="InParanoid" id="A9SU70"/>
<dbReference type="Proteomes" id="UP000006727">
    <property type="component" value="Chromosome 2"/>
</dbReference>
<dbReference type="GO" id="GO:0005886">
    <property type="term" value="C:plasma membrane"/>
    <property type="evidence" value="ECO:0007669"/>
    <property type="project" value="UniProtKB-SubCell"/>
</dbReference>
<dbReference type="InterPro" id="IPR006702">
    <property type="entry name" value="CASP_dom"/>
</dbReference>
<dbReference type="PANTHER" id="PTHR33573:SF50">
    <property type="entry name" value="CASP-LIKE PROTEIN 4A3"/>
    <property type="match status" value="1"/>
</dbReference>
<dbReference type="PANTHER" id="PTHR33573">
    <property type="entry name" value="CASP-LIKE PROTEIN 4A4"/>
    <property type="match status" value="1"/>
</dbReference>
<dbReference type="Pfam" id="PF04535">
    <property type="entry name" value="CASP_dom"/>
    <property type="match status" value="1"/>
</dbReference>
<feature type="chain" id="PRO_0000391524" description="CASP-like protein UU1">
    <location>
        <begin position="1"/>
        <end position="336"/>
    </location>
</feature>
<feature type="topological domain" description="Cytoplasmic" evidence="2">
    <location>
        <begin position="1"/>
        <end position="170"/>
    </location>
</feature>
<feature type="transmembrane region" description="Helical" evidence="2">
    <location>
        <begin position="171"/>
        <end position="191"/>
    </location>
</feature>
<feature type="topological domain" description="Extracellular" evidence="2">
    <location>
        <begin position="192"/>
        <end position="222"/>
    </location>
</feature>
<feature type="transmembrane region" description="Helical" evidence="2">
    <location>
        <begin position="223"/>
        <end position="243"/>
    </location>
</feature>
<feature type="topological domain" description="Cytoplasmic" evidence="2">
    <location>
        <begin position="244"/>
        <end position="261"/>
    </location>
</feature>
<feature type="transmembrane region" description="Helical" evidence="2">
    <location>
        <begin position="262"/>
        <end position="282"/>
    </location>
</feature>
<feature type="topological domain" description="Extracellular" evidence="2">
    <location>
        <begin position="283"/>
        <end position="307"/>
    </location>
</feature>
<feature type="transmembrane region" description="Helical" evidence="2">
    <location>
        <begin position="308"/>
        <end position="328"/>
    </location>
</feature>
<feature type="topological domain" description="Cytoplasmic" evidence="2">
    <location>
        <begin position="329"/>
        <end position="336"/>
    </location>
</feature>
<accession>A9SU70</accession>